<reference key="1">
    <citation type="submission" date="1997-05" db="EMBL/GenBank/DDBJ databases">
        <title>Rearrangement of the rRNA genes in Rickettsia preceeded the divergence of the typhus and the spotted fever group Rickettsia.</title>
        <authorList>
            <person name="Andersson S.G.E."/>
            <person name="Stothard D.R."/>
            <person name="Romedenne M."/>
            <person name="Viseur N."/>
            <person name="Fuerst P."/>
            <person name="Kurland C.G."/>
        </authorList>
    </citation>
    <scope>NUCLEOTIDE SEQUENCE [GENOMIC DNA]</scope>
</reference>
<proteinExistence type="inferred from homology"/>
<protein>
    <recommendedName>
        <fullName evidence="1">Methionyl-tRNA formyltransferase</fullName>
        <ecNumber evidence="1">2.1.2.9</ecNumber>
    </recommendedName>
</protein>
<keyword id="KW-0648">Protein biosynthesis</keyword>
<keyword id="KW-0808">Transferase</keyword>
<name>FMT_RICSI</name>
<gene>
    <name type="primary">fmt</name>
</gene>
<comment type="function">
    <text evidence="1">Attaches a formyl group to the free amino group of methionyl-tRNA(fMet). The formyl group appears to play a dual role in the initiator identity of N-formylmethionyl-tRNA by promoting its recognition by IF2 and preventing the misappropriation of this tRNA by the elongation apparatus.</text>
</comment>
<comment type="catalytic activity">
    <reaction evidence="1">
        <text>L-methionyl-tRNA(fMet) + (6R)-10-formyltetrahydrofolate = N-formyl-L-methionyl-tRNA(fMet) + (6S)-5,6,7,8-tetrahydrofolate + H(+)</text>
        <dbReference type="Rhea" id="RHEA:24380"/>
        <dbReference type="Rhea" id="RHEA-COMP:9952"/>
        <dbReference type="Rhea" id="RHEA-COMP:9953"/>
        <dbReference type="ChEBI" id="CHEBI:15378"/>
        <dbReference type="ChEBI" id="CHEBI:57453"/>
        <dbReference type="ChEBI" id="CHEBI:78530"/>
        <dbReference type="ChEBI" id="CHEBI:78844"/>
        <dbReference type="ChEBI" id="CHEBI:195366"/>
        <dbReference type="EC" id="2.1.2.9"/>
    </reaction>
</comment>
<comment type="similarity">
    <text evidence="2">Belongs to the Fmt family.</text>
</comment>
<evidence type="ECO:0000250" key="1">
    <source>
        <dbReference type="UniProtKB" id="P23882"/>
    </source>
</evidence>
<evidence type="ECO:0000305" key="2"/>
<feature type="chain" id="PRO_0000083036" description="Methionyl-tRNA formyltransferase">
    <location>
        <begin position="1" status="less than"/>
        <end position="73"/>
    </location>
</feature>
<feature type="non-terminal residue">
    <location>
        <position position="1"/>
    </location>
</feature>
<dbReference type="EC" id="2.1.2.9" evidence="1"/>
<dbReference type="EMBL" id="Y13124">
    <property type="protein sequence ID" value="CAA73591.1"/>
    <property type="molecule type" value="Genomic_DNA"/>
</dbReference>
<dbReference type="SMR" id="O33575"/>
<dbReference type="GO" id="GO:0004479">
    <property type="term" value="F:methionyl-tRNA formyltransferase activity"/>
    <property type="evidence" value="ECO:0007669"/>
    <property type="project" value="UniProtKB-EC"/>
</dbReference>
<dbReference type="CDD" id="cd08704">
    <property type="entry name" value="Met_tRNA_FMT_C"/>
    <property type="match status" value="1"/>
</dbReference>
<dbReference type="Gene3D" id="3.10.25.10">
    <property type="entry name" value="Formyl transferase, C-terminal domain"/>
    <property type="match status" value="1"/>
</dbReference>
<dbReference type="InterPro" id="IPR005793">
    <property type="entry name" value="Formyl_trans_C"/>
</dbReference>
<dbReference type="InterPro" id="IPR037022">
    <property type="entry name" value="Formyl_trans_C_sf"/>
</dbReference>
<dbReference type="InterPro" id="IPR011034">
    <property type="entry name" value="Formyl_transferase-like_C_sf"/>
</dbReference>
<dbReference type="InterPro" id="IPR044135">
    <property type="entry name" value="Met-tRNA-FMT_C"/>
</dbReference>
<dbReference type="Pfam" id="PF02911">
    <property type="entry name" value="Formyl_trans_C"/>
    <property type="match status" value="1"/>
</dbReference>
<dbReference type="SUPFAM" id="SSF50486">
    <property type="entry name" value="FMT C-terminal domain-like"/>
    <property type="match status" value="1"/>
</dbReference>
<accession>O33575</accession>
<sequence length="73" mass="8270">YFSYNDKIIKILEAEYLNADHHCTSGTVISDKLEIACGSGILRVKKLQQESKKALNIEEFLRGTNILKDTVLK</sequence>
<organism>
    <name type="scientific">Rickettsia sibirica</name>
    <dbReference type="NCBI Taxonomy" id="35793"/>
    <lineage>
        <taxon>Bacteria</taxon>
        <taxon>Pseudomonadati</taxon>
        <taxon>Pseudomonadota</taxon>
        <taxon>Alphaproteobacteria</taxon>
        <taxon>Rickettsiales</taxon>
        <taxon>Rickettsiaceae</taxon>
        <taxon>Rickettsieae</taxon>
        <taxon>Rickettsia</taxon>
        <taxon>spotted fever group</taxon>
        <taxon>Rickettsia sibirica subgroup</taxon>
    </lineage>
</organism>